<proteinExistence type="evidence at protein level"/>
<evidence type="ECO:0000255" key="1">
    <source>
        <dbReference type="PROSITE-ProRule" id="PRU00448"/>
    </source>
</evidence>
<evidence type="ECO:0000269" key="2">
    <source>
    </source>
</evidence>
<evidence type="ECO:0000269" key="3">
    <source>
    </source>
</evidence>
<evidence type="ECO:0000269" key="4">
    <source>
    </source>
</evidence>
<evidence type="ECO:0000305" key="5"/>
<evidence type="ECO:0000312" key="6">
    <source>
        <dbReference type="Araport" id="AT2G41110"/>
    </source>
</evidence>
<evidence type="ECO:0000312" key="7">
    <source>
        <dbReference type="EMBL" id="AAD12000.1"/>
    </source>
</evidence>
<name>CALM2_ARATH</name>
<gene>
    <name type="primary">CAM2</name>
    <name type="synonym">ATCAL5</name>
    <name type="synonym">CAL1</name>
    <name evidence="6" type="ordered locus">At2g41110</name>
    <name evidence="7" type="ORF">T3K9.12</name>
</gene>
<comment type="function">
    <text>Calmodulin mediates the control of a large number of enzymes, ion channels and other proteins by Ca(2+). Among the enzymes to be stimulated by the calmodulin-Ca(2+) complex are a number of protein kinases and phosphatases.</text>
</comment>
<comment type="subunit">
    <text evidence="2 3 4">Interacts with KCBP and CIP111 (PubMed:10531384, PubMed:11346951). Binds to IQD1 and IQD20 (PubMed:23204523).</text>
</comment>
<comment type="subcellular location">
    <subcellularLocation>
        <location evidence="4">Cytoplasm</location>
        <location evidence="4">Cytoskeleton</location>
    </subcellularLocation>
    <subcellularLocation>
        <location evidence="4">Cytoplasm</location>
    </subcellularLocation>
    <text evidence="4">Recruited by IQD1 to microtubules.</text>
</comment>
<comment type="alternative products">
    <event type="alternative splicing"/>
    <isoform>
        <id>P0DH97-1</id>
        <name>1</name>
        <sequence type="displayed"/>
    </isoform>
    <text>A number of isoforms are produced. According to EST sequences.</text>
</comment>
<comment type="miscellaneous">
    <text>This protein has four functional calcium-binding sites.</text>
</comment>
<comment type="similarity">
    <text evidence="5">Belongs to the calmodulin family.</text>
</comment>
<accession>P0DH97</accession>
<accession>P25069</accession>
<sequence>MADQLTDDQISEFKEAFSLFDKDGDGCITTKELGTVMRSLGQNPTEAELQDMINEVDADGNGTIDFPEFLNLMARKMKDTDSEEELKEAFRVFDKDQNGFISAAELRHVMTNLGEKLTDEEVDEMIKEADVDGDGQINYEEFVKVMMAK</sequence>
<protein>
    <recommendedName>
        <fullName>Calmodulin-2</fullName>
        <shortName>CaM-2</shortName>
    </recommendedName>
</protein>
<feature type="chain" id="PRO_0000198281" description="Calmodulin-2">
    <location>
        <begin position="1"/>
        <end position="149"/>
    </location>
</feature>
<feature type="domain" description="EF-hand 1" evidence="1">
    <location>
        <begin position="8"/>
        <end position="43"/>
    </location>
</feature>
<feature type="domain" description="EF-hand 2" evidence="1">
    <location>
        <begin position="44"/>
        <end position="79"/>
    </location>
</feature>
<feature type="domain" description="EF-hand 3" evidence="1">
    <location>
        <begin position="81"/>
        <end position="116"/>
    </location>
</feature>
<feature type="domain" description="EF-hand 4" evidence="1">
    <location>
        <begin position="117"/>
        <end position="149"/>
    </location>
</feature>
<feature type="binding site" evidence="1">
    <location>
        <position position="21"/>
    </location>
    <ligand>
        <name>Ca(2+)</name>
        <dbReference type="ChEBI" id="CHEBI:29108"/>
        <label>1</label>
    </ligand>
</feature>
<feature type="binding site" evidence="1">
    <location>
        <position position="23"/>
    </location>
    <ligand>
        <name>Ca(2+)</name>
        <dbReference type="ChEBI" id="CHEBI:29108"/>
        <label>1</label>
    </ligand>
</feature>
<feature type="binding site" evidence="1">
    <location>
        <position position="25"/>
    </location>
    <ligand>
        <name>Ca(2+)</name>
        <dbReference type="ChEBI" id="CHEBI:29108"/>
        <label>1</label>
    </ligand>
</feature>
<feature type="binding site" evidence="1">
    <location>
        <position position="27"/>
    </location>
    <ligand>
        <name>Ca(2+)</name>
        <dbReference type="ChEBI" id="CHEBI:29108"/>
        <label>1</label>
    </ligand>
</feature>
<feature type="binding site" evidence="1">
    <location>
        <position position="32"/>
    </location>
    <ligand>
        <name>Ca(2+)</name>
        <dbReference type="ChEBI" id="CHEBI:29108"/>
        <label>1</label>
    </ligand>
</feature>
<feature type="binding site" evidence="1">
    <location>
        <position position="57"/>
    </location>
    <ligand>
        <name>Ca(2+)</name>
        <dbReference type="ChEBI" id="CHEBI:29108"/>
        <label>2</label>
    </ligand>
</feature>
<feature type="binding site" evidence="1">
    <location>
        <position position="59"/>
    </location>
    <ligand>
        <name>Ca(2+)</name>
        <dbReference type="ChEBI" id="CHEBI:29108"/>
        <label>2</label>
    </ligand>
</feature>
<feature type="binding site" evidence="1">
    <location>
        <position position="61"/>
    </location>
    <ligand>
        <name>Ca(2+)</name>
        <dbReference type="ChEBI" id="CHEBI:29108"/>
        <label>2</label>
    </ligand>
</feature>
<feature type="binding site" evidence="1">
    <location>
        <position position="63"/>
    </location>
    <ligand>
        <name>Ca(2+)</name>
        <dbReference type="ChEBI" id="CHEBI:29108"/>
        <label>2</label>
    </ligand>
</feature>
<feature type="binding site" evidence="1">
    <location>
        <position position="68"/>
    </location>
    <ligand>
        <name>Ca(2+)</name>
        <dbReference type="ChEBI" id="CHEBI:29108"/>
        <label>2</label>
    </ligand>
</feature>
<feature type="binding site" evidence="1">
    <location>
        <position position="94"/>
    </location>
    <ligand>
        <name>Ca(2+)</name>
        <dbReference type="ChEBI" id="CHEBI:29108"/>
        <label>3</label>
    </ligand>
</feature>
<feature type="binding site" evidence="1">
    <location>
        <position position="96"/>
    </location>
    <ligand>
        <name>Ca(2+)</name>
        <dbReference type="ChEBI" id="CHEBI:29108"/>
        <label>3</label>
    </ligand>
</feature>
<feature type="binding site" evidence="1">
    <location>
        <position position="98"/>
    </location>
    <ligand>
        <name>Ca(2+)</name>
        <dbReference type="ChEBI" id="CHEBI:29108"/>
        <label>3</label>
    </ligand>
</feature>
<feature type="binding site" evidence="1">
    <location>
        <position position="105"/>
    </location>
    <ligand>
        <name>Ca(2+)</name>
        <dbReference type="ChEBI" id="CHEBI:29108"/>
        <label>3</label>
    </ligand>
</feature>
<feature type="binding site" evidence="1">
    <location>
        <position position="130"/>
    </location>
    <ligand>
        <name>Ca(2+)</name>
        <dbReference type="ChEBI" id="CHEBI:29108"/>
        <label>4</label>
    </ligand>
</feature>
<feature type="binding site" evidence="1">
    <location>
        <position position="132"/>
    </location>
    <ligand>
        <name>Ca(2+)</name>
        <dbReference type="ChEBI" id="CHEBI:29108"/>
        <label>4</label>
    </ligand>
</feature>
<feature type="binding site" evidence="1">
    <location>
        <position position="134"/>
    </location>
    <ligand>
        <name>Ca(2+)</name>
        <dbReference type="ChEBI" id="CHEBI:29108"/>
        <label>4</label>
    </ligand>
</feature>
<feature type="binding site" evidence="1">
    <location>
        <position position="136"/>
    </location>
    <ligand>
        <name>Ca(2+)</name>
        <dbReference type="ChEBI" id="CHEBI:29108"/>
        <label>4</label>
    </ligand>
</feature>
<feature type="binding site" evidence="1">
    <location>
        <position position="141"/>
    </location>
    <ligand>
        <name>Ca(2+)</name>
        <dbReference type="ChEBI" id="CHEBI:29108"/>
        <label>4</label>
    </ligand>
</feature>
<keyword id="KW-0025">Alternative splicing</keyword>
<keyword id="KW-0106">Calcium</keyword>
<keyword id="KW-0963">Cytoplasm</keyword>
<keyword id="KW-0206">Cytoskeleton</keyword>
<keyword id="KW-0479">Metal-binding</keyword>
<keyword id="KW-1185">Reference proteome</keyword>
<keyword id="KW-0677">Repeat</keyword>
<reference key="1">
    <citation type="journal article" date="1993" name="Cell. Mol. Biol. Res.">
        <title>Structure and organization of a novel calmodulin gene of Arabidopsis thaliana.</title>
        <authorList>
            <person name="Chandra A."/>
            <person name="Upadhyaya K.C."/>
        </authorList>
    </citation>
    <scope>NUCLEOTIDE SEQUENCE [GENOMIC DNA]</scope>
    <source>
        <strain>cv. C24</strain>
        <tissue>Seedling</tissue>
    </source>
</reference>
<reference key="2">
    <citation type="journal article" date="1995" name="Plant Cell Physiol.">
        <title>Touch-inducible genes for calmodulin and a calmodulin-related protein are located in tandem on a chromosome of Arabidopsis thaliana.</title>
        <authorList>
            <person name="Ito T."/>
            <person name="Hirano M."/>
            <person name="Akama K."/>
            <person name="Shimura Y."/>
            <person name="Okada K."/>
        </authorList>
    </citation>
    <scope>NUCLEOTIDE SEQUENCE [GENOMIC DNA]</scope>
    <source>
        <strain>cv. Landsberg erecta</strain>
    </source>
</reference>
<reference key="3">
    <citation type="journal article" date="1999" name="Nature">
        <title>Sequence and analysis of chromosome 2 of the plant Arabidopsis thaliana.</title>
        <authorList>
            <person name="Lin X."/>
            <person name="Kaul S."/>
            <person name="Rounsley S.D."/>
            <person name="Shea T.P."/>
            <person name="Benito M.-I."/>
            <person name="Town C.D."/>
            <person name="Fujii C.Y."/>
            <person name="Mason T.M."/>
            <person name="Bowman C.L."/>
            <person name="Barnstead M.E."/>
            <person name="Feldblyum T.V."/>
            <person name="Buell C.R."/>
            <person name="Ketchum K.A."/>
            <person name="Lee J.J."/>
            <person name="Ronning C.M."/>
            <person name="Koo H.L."/>
            <person name="Moffat K.S."/>
            <person name="Cronin L.A."/>
            <person name="Shen M."/>
            <person name="Pai G."/>
            <person name="Van Aken S."/>
            <person name="Umayam L."/>
            <person name="Tallon L.J."/>
            <person name="Gill J.E."/>
            <person name="Adams M.D."/>
            <person name="Carrera A.J."/>
            <person name="Creasy T.H."/>
            <person name="Goodman H.M."/>
            <person name="Somerville C.R."/>
            <person name="Copenhaver G.P."/>
            <person name="Preuss D."/>
            <person name="Nierman W.C."/>
            <person name="White O."/>
            <person name="Eisen J.A."/>
            <person name="Salzberg S.L."/>
            <person name="Fraser C.M."/>
            <person name="Venter J.C."/>
        </authorList>
    </citation>
    <scope>NUCLEOTIDE SEQUENCE [LARGE SCALE GENOMIC DNA]</scope>
    <source>
        <strain>cv. Columbia</strain>
    </source>
</reference>
<reference key="4">
    <citation type="journal article" date="2017" name="Plant J.">
        <title>Araport11: a complete reannotation of the Arabidopsis thaliana reference genome.</title>
        <authorList>
            <person name="Cheng C.Y."/>
            <person name="Krishnakumar V."/>
            <person name="Chan A.P."/>
            <person name="Thibaud-Nissen F."/>
            <person name="Schobel S."/>
            <person name="Town C.D."/>
        </authorList>
    </citation>
    <scope>GENOME REANNOTATION</scope>
    <source>
        <strain>cv. Columbia</strain>
    </source>
</reference>
<reference key="5">
    <citation type="journal article" date="2003" name="Science">
        <title>Empirical analysis of transcriptional activity in the Arabidopsis genome.</title>
        <authorList>
            <person name="Yamada K."/>
            <person name="Lim J."/>
            <person name="Dale J.M."/>
            <person name="Chen H."/>
            <person name="Shinn P."/>
            <person name="Palm C.J."/>
            <person name="Southwick A.M."/>
            <person name="Wu H.C."/>
            <person name="Kim C.J."/>
            <person name="Nguyen M."/>
            <person name="Pham P.K."/>
            <person name="Cheuk R.F."/>
            <person name="Karlin-Newmann G."/>
            <person name="Liu S.X."/>
            <person name="Lam B."/>
            <person name="Sakano H."/>
            <person name="Wu T."/>
            <person name="Yu G."/>
            <person name="Miranda M."/>
            <person name="Quach H.L."/>
            <person name="Tripp M."/>
            <person name="Chang C.H."/>
            <person name="Lee J.M."/>
            <person name="Toriumi M.J."/>
            <person name="Chan M.M."/>
            <person name="Tang C.C."/>
            <person name="Onodera C.S."/>
            <person name="Deng J.M."/>
            <person name="Akiyama K."/>
            <person name="Ansari Y."/>
            <person name="Arakawa T."/>
            <person name="Banh J."/>
            <person name="Banno F."/>
            <person name="Bowser L."/>
            <person name="Brooks S.Y."/>
            <person name="Carninci P."/>
            <person name="Chao Q."/>
            <person name="Choy N."/>
            <person name="Enju A."/>
            <person name="Goldsmith A.D."/>
            <person name="Gurjal M."/>
            <person name="Hansen N.F."/>
            <person name="Hayashizaki Y."/>
            <person name="Johnson-Hopson C."/>
            <person name="Hsuan V.W."/>
            <person name="Iida K."/>
            <person name="Karnes M."/>
            <person name="Khan S."/>
            <person name="Koesema E."/>
            <person name="Ishida J."/>
            <person name="Jiang P.X."/>
            <person name="Jones T."/>
            <person name="Kawai J."/>
            <person name="Kamiya A."/>
            <person name="Meyers C."/>
            <person name="Nakajima M."/>
            <person name="Narusaka M."/>
            <person name="Seki M."/>
            <person name="Sakurai T."/>
            <person name="Satou M."/>
            <person name="Tamse R."/>
            <person name="Vaysberg M."/>
            <person name="Wallender E.K."/>
            <person name="Wong C."/>
            <person name="Yamamura Y."/>
            <person name="Yuan S."/>
            <person name="Shinozaki K."/>
            <person name="Davis R.W."/>
            <person name="Theologis A."/>
            <person name="Ecker J.R."/>
        </authorList>
    </citation>
    <scope>NUCLEOTIDE SEQUENCE [LARGE SCALE MRNA]</scope>
    <source>
        <strain>cv. Columbia</strain>
    </source>
</reference>
<reference key="6">
    <citation type="journal article" date="1993" name="Plant Mol. Biol.">
        <title>Calmodulin isoforms in Arabidopsis encoded by multiple divergent mRNAs.</title>
        <authorList>
            <person name="Gawienowski M.C."/>
            <person name="Szymanski D."/>
            <person name="Perera I.Y."/>
            <person name="Zielinski R.E."/>
        </authorList>
    </citation>
    <scope>NUCLEOTIDE SEQUENCE [MRNA] OF 12-149</scope>
</reference>
<reference key="7">
    <citation type="journal article" date="1999" name="J. Biol. Chem.">
        <title>Interaction of a kinesin-like protein with calmodulin isoforms from Arabidopsis.</title>
        <authorList>
            <person name="Reddy V.S."/>
            <person name="Safadi F."/>
            <person name="Zielinski R.E."/>
            <person name="Reddy A.S."/>
        </authorList>
    </citation>
    <scope>INTERACTION WITH KCBP</scope>
</reference>
<reference key="8">
    <citation type="journal article" date="2001" name="Planta">
        <title>Isolation of cDNA and genomic DNA clones encoding a calmodulin-binding protein related to a family of ATPases involved in cell division and vesicle fusion.</title>
        <authorList>
            <person name="Buaboocha T."/>
            <person name="Liao B."/>
            <person name="Zielinski R.E."/>
        </authorList>
    </citation>
    <scope>INTERACTION WITH CAM2</scope>
</reference>
<reference key="9">
    <citation type="journal article" date="2003" name="New Phytol.">
        <title>Calmodulins and related potential calcium sensors of Arabidopsis.</title>
        <authorList>
            <person name="McCormack E."/>
            <person name="Braam J."/>
        </authorList>
    </citation>
    <scope>GENE FAMILY</scope>
    <scope>NOMENCLATURE</scope>
</reference>
<reference key="10">
    <citation type="journal article" date="2013" name="J. Biol. Chem.">
        <title>Arabidopsis calmodulin-binding protein IQ67-domain 1 localizes to microtubules and interacts with kinesin light chain-related protein-1.</title>
        <authorList>
            <person name="Buerstenbinder K."/>
            <person name="Savchenko T."/>
            <person name="Mueller J."/>
            <person name="Adamson A.W."/>
            <person name="Stamm G."/>
            <person name="Kwong R."/>
            <person name="Zipp B.J."/>
            <person name="Dinesh D.C."/>
            <person name="Abel S."/>
        </authorList>
    </citation>
    <scope>INTERACTION WITH IQD1 AND IQD20</scope>
    <scope>SUBCELLULAR LOCATION</scope>
    <source>
        <strain>cv. Columbia</strain>
    </source>
</reference>
<dbReference type="EMBL" id="X67273">
    <property type="protein sequence ID" value="CAA47690.1"/>
    <property type="molecule type" value="Genomic_DNA"/>
</dbReference>
<dbReference type="EMBL" id="D45848">
    <property type="protein sequence ID" value="BAA08283.1"/>
    <property type="molecule type" value="Genomic_DNA"/>
</dbReference>
<dbReference type="EMBL" id="AC004261">
    <property type="protein sequence ID" value="AAD12000.1"/>
    <property type="molecule type" value="Genomic_DNA"/>
</dbReference>
<dbReference type="EMBL" id="CP002685">
    <property type="protein sequence ID" value="AEC09932.1"/>
    <property type="molecule type" value="Genomic_DNA"/>
</dbReference>
<dbReference type="EMBL" id="AY065179">
    <property type="protein sequence ID" value="AAL38355.1"/>
    <property type="molecule type" value="mRNA"/>
</dbReference>
<dbReference type="EMBL" id="AY128752">
    <property type="protein sequence ID" value="AAM91152.1"/>
    <property type="molecule type" value="mRNA"/>
</dbReference>
<dbReference type="EMBL" id="Z12023">
    <property type="protein sequence ID" value="CAA78058.1"/>
    <property type="molecule type" value="mRNA"/>
</dbReference>
<dbReference type="PIR" id="H84667">
    <property type="entry name" value="H84667"/>
</dbReference>
<dbReference type="PIR" id="S22503">
    <property type="entry name" value="S22503"/>
</dbReference>
<dbReference type="RefSeq" id="NP_180271.1">
    <molecule id="P0DH97-1"/>
    <property type="nucleotide sequence ID" value="NM_128261.5"/>
</dbReference>
<dbReference type="RefSeq" id="NP_191239.1">
    <molecule id="P0DH97-1"/>
    <property type="nucleotide sequence ID" value="NM_115539.5"/>
</dbReference>
<dbReference type="RefSeq" id="NP_850344.1">
    <molecule id="P0DH97-1"/>
    <property type="nucleotide sequence ID" value="NM_180013.3"/>
</dbReference>
<dbReference type="SMR" id="P0DH97"/>
<dbReference type="BioGRID" id="10163">
    <property type="interactions" value="5"/>
</dbReference>
<dbReference type="BioGRID" id="2597">
    <property type="interactions" value="11"/>
</dbReference>
<dbReference type="BioGRID" id="4047">
    <property type="interactions" value="3"/>
</dbReference>
<dbReference type="FunCoup" id="P0DH97">
    <property type="interactions" value="3625"/>
</dbReference>
<dbReference type="IntAct" id="P0DH97">
    <property type="interactions" value="1"/>
</dbReference>
<dbReference type="STRING" id="3702.P0DH97"/>
<dbReference type="iPTMnet" id="P0DH97"/>
<dbReference type="PaxDb" id="3702-AT2G27030.3"/>
<dbReference type="EnsemblPlants" id="AT2G27030.1">
    <property type="protein sequence ID" value="AT2G27030.1"/>
    <property type="gene ID" value="AT2G27030"/>
</dbReference>
<dbReference type="EnsemblPlants" id="AT2G41110.1">
    <property type="protein sequence ID" value="AT2G41110.1"/>
    <property type="gene ID" value="AT2G41110"/>
</dbReference>
<dbReference type="EnsemblPlants" id="AT3G56800.1">
    <property type="protein sequence ID" value="AT3G56800.1"/>
    <property type="gene ID" value="AT3G56800"/>
</dbReference>
<dbReference type="GeneID" id="817245"/>
<dbReference type="GeneID" id="818710"/>
<dbReference type="Gramene" id="AT2G27030.1">
    <property type="protein sequence ID" value="AT2G27030.1"/>
    <property type="gene ID" value="AT2G27030"/>
</dbReference>
<dbReference type="Gramene" id="AT2G41110.1">
    <property type="protein sequence ID" value="AT2G41110.1"/>
    <property type="gene ID" value="AT2G41110"/>
</dbReference>
<dbReference type="Gramene" id="AT3G56800.1">
    <property type="protein sequence ID" value="AT3G56800.1"/>
    <property type="gene ID" value="AT3G56800"/>
</dbReference>
<dbReference type="KEGG" id="ath:AT2G27030"/>
<dbReference type="KEGG" id="ath:AT2G41110"/>
<dbReference type="KEGG" id="ath:AT3G56800"/>
<dbReference type="Araport" id="AT2G41110"/>
<dbReference type="TAIR" id="AT2G41110">
    <property type="gene designation" value="CAM2"/>
</dbReference>
<dbReference type="eggNOG" id="KOG0027">
    <property type="taxonomic scope" value="Eukaryota"/>
</dbReference>
<dbReference type="HOGENOM" id="CLU_061288_2_0_1"/>
<dbReference type="InParanoid" id="P0DH97"/>
<dbReference type="OMA" id="RIDCESI"/>
<dbReference type="OrthoDB" id="1042764at2759"/>
<dbReference type="PhylomeDB" id="P0DH97"/>
<dbReference type="SABIO-RK" id="P0DH97"/>
<dbReference type="PRO" id="PR:P0DH97"/>
<dbReference type="Proteomes" id="UP000006548">
    <property type="component" value="Chromosome 2"/>
</dbReference>
<dbReference type="ExpressionAtlas" id="P0DH97">
    <property type="expression patterns" value="baseline and differential"/>
</dbReference>
<dbReference type="GO" id="GO:0005737">
    <property type="term" value="C:cytoplasm"/>
    <property type="evidence" value="ECO:0000314"/>
    <property type="project" value="UniProtKB"/>
</dbReference>
<dbReference type="GO" id="GO:0005874">
    <property type="term" value="C:microtubule"/>
    <property type="evidence" value="ECO:0000314"/>
    <property type="project" value="UniProtKB"/>
</dbReference>
<dbReference type="GO" id="GO:0005509">
    <property type="term" value="F:calcium ion binding"/>
    <property type="evidence" value="ECO:0007669"/>
    <property type="project" value="InterPro"/>
</dbReference>
<dbReference type="CDD" id="cd00051">
    <property type="entry name" value="EFh"/>
    <property type="match status" value="2"/>
</dbReference>
<dbReference type="FunFam" id="1.10.238.10:FF:000034">
    <property type="entry name" value="Calmodulin"/>
    <property type="match status" value="1"/>
</dbReference>
<dbReference type="FunFam" id="1.10.238.10:FF:000042">
    <property type="entry name" value="Calmodulin"/>
    <property type="match status" value="1"/>
</dbReference>
<dbReference type="Gene3D" id="1.10.238.10">
    <property type="entry name" value="EF-hand"/>
    <property type="match status" value="3"/>
</dbReference>
<dbReference type="InterPro" id="IPR050230">
    <property type="entry name" value="CALM/Myosin/TropC-like"/>
</dbReference>
<dbReference type="InterPro" id="IPR011992">
    <property type="entry name" value="EF-hand-dom_pair"/>
</dbReference>
<dbReference type="InterPro" id="IPR018247">
    <property type="entry name" value="EF_Hand_1_Ca_BS"/>
</dbReference>
<dbReference type="InterPro" id="IPR002048">
    <property type="entry name" value="EF_hand_dom"/>
</dbReference>
<dbReference type="PANTHER" id="PTHR23048:SF53">
    <property type="entry name" value="CALMODULIN"/>
    <property type="match status" value="1"/>
</dbReference>
<dbReference type="PANTHER" id="PTHR23048">
    <property type="entry name" value="MYOSIN LIGHT CHAIN 1, 3"/>
    <property type="match status" value="1"/>
</dbReference>
<dbReference type="Pfam" id="PF13499">
    <property type="entry name" value="EF-hand_7"/>
    <property type="match status" value="2"/>
</dbReference>
<dbReference type="SMART" id="SM00054">
    <property type="entry name" value="EFh"/>
    <property type="match status" value="4"/>
</dbReference>
<dbReference type="SUPFAM" id="SSF47473">
    <property type="entry name" value="EF-hand"/>
    <property type="match status" value="1"/>
</dbReference>
<dbReference type="PROSITE" id="PS00018">
    <property type="entry name" value="EF_HAND_1"/>
    <property type="match status" value="4"/>
</dbReference>
<dbReference type="PROSITE" id="PS50222">
    <property type="entry name" value="EF_HAND_2"/>
    <property type="match status" value="4"/>
</dbReference>
<organism>
    <name type="scientific">Arabidopsis thaliana</name>
    <name type="common">Mouse-ear cress</name>
    <dbReference type="NCBI Taxonomy" id="3702"/>
    <lineage>
        <taxon>Eukaryota</taxon>
        <taxon>Viridiplantae</taxon>
        <taxon>Streptophyta</taxon>
        <taxon>Embryophyta</taxon>
        <taxon>Tracheophyta</taxon>
        <taxon>Spermatophyta</taxon>
        <taxon>Magnoliopsida</taxon>
        <taxon>eudicotyledons</taxon>
        <taxon>Gunneridae</taxon>
        <taxon>Pentapetalae</taxon>
        <taxon>rosids</taxon>
        <taxon>malvids</taxon>
        <taxon>Brassicales</taxon>
        <taxon>Brassicaceae</taxon>
        <taxon>Camelineae</taxon>
        <taxon>Arabidopsis</taxon>
    </lineage>
</organism>